<sequence>MTMTDPIADFLTRLRNANSAYHDEVTLPHSKIKANIAEILKKEGYISDYRTEDARVGKSLVVQLKYGPSRERSIAGLRRVSKPGLRVYAKSTNLPRVLGGLGVAIISTSSGLRTDRQAAREGVGGEVLAYVW</sequence>
<proteinExistence type="inferred from homology"/>
<comment type="function">
    <text evidence="1">One of the primary rRNA binding proteins, it binds directly to 16S rRNA central domain where it helps coordinate assembly of the platform of the 30S subunit.</text>
</comment>
<comment type="subunit">
    <text evidence="1">Part of the 30S ribosomal subunit. Contacts proteins S5 and S12.</text>
</comment>
<comment type="similarity">
    <text evidence="1">Belongs to the universal ribosomal protein uS8 family.</text>
</comment>
<feature type="chain" id="PRO_0000290884" description="Small ribosomal subunit protein uS8">
    <location>
        <begin position="1"/>
        <end position="132"/>
    </location>
</feature>
<gene>
    <name evidence="1" type="primary">rpsH</name>
    <name type="ordered locus">Mvan_1336</name>
</gene>
<dbReference type="EMBL" id="CP000511">
    <property type="protein sequence ID" value="ABM12170.1"/>
    <property type="molecule type" value="Genomic_DNA"/>
</dbReference>
<dbReference type="RefSeq" id="WP_011778600.1">
    <property type="nucleotide sequence ID" value="NZ_JACKSD010000069.1"/>
</dbReference>
<dbReference type="SMR" id="A1T4S0"/>
<dbReference type="STRING" id="350058.Mvan_1336"/>
<dbReference type="KEGG" id="mva:Mvan_1336"/>
<dbReference type="eggNOG" id="COG0096">
    <property type="taxonomic scope" value="Bacteria"/>
</dbReference>
<dbReference type="HOGENOM" id="CLU_098428_0_1_11"/>
<dbReference type="Proteomes" id="UP000009159">
    <property type="component" value="Chromosome"/>
</dbReference>
<dbReference type="GO" id="GO:1990904">
    <property type="term" value="C:ribonucleoprotein complex"/>
    <property type="evidence" value="ECO:0007669"/>
    <property type="project" value="UniProtKB-KW"/>
</dbReference>
<dbReference type="GO" id="GO:0005840">
    <property type="term" value="C:ribosome"/>
    <property type="evidence" value="ECO:0007669"/>
    <property type="project" value="UniProtKB-KW"/>
</dbReference>
<dbReference type="GO" id="GO:0019843">
    <property type="term" value="F:rRNA binding"/>
    <property type="evidence" value="ECO:0007669"/>
    <property type="project" value="UniProtKB-UniRule"/>
</dbReference>
<dbReference type="GO" id="GO:0003735">
    <property type="term" value="F:structural constituent of ribosome"/>
    <property type="evidence" value="ECO:0007669"/>
    <property type="project" value="InterPro"/>
</dbReference>
<dbReference type="GO" id="GO:0006412">
    <property type="term" value="P:translation"/>
    <property type="evidence" value="ECO:0007669"/>
    <property type="project" value="UniProtKB-UniRule"/>
</dbReference>
<dbReference type="FunFam" id="3.30.1370.30:FF:000002">
    <property type="entry name" value="30S ribosomal protein S8"/>
    <property type="match status" value="1"/>
</dbReference>
<dbReference type="FunFam" id="3.30.1490.10:FF:000001">
    <property type="entry name" value="30S ribosomal protein S8"/>
    <property type="match status" value="1"/>
</dbReference>
<dbReference type="Gene3D" id="3.30.1370.30">
    <property type="match status" value="1"/>
</dbReference>
<dbReference type="Gene3D" id="3.30.1490.10">
    <property type="match status" value="1"/>
</dbReference>
<dbReference type="HAMAP" id="MF_01302_B">
    <property type="entry name" value="Ribosomal_uS8_B"/>
    <property type="match status" value="1"/>
</dbReference>
<dbReference type="InterPro" id="IPR000630">
    <property type="entry name" value="Ribosomal_uS8"/>
</dbReference>
<dbReference type="InterPro" id="IPR035987">
    <property type="entry name" value="Ribosomal_uS8_sf"/>
</dbReference>
<dbReference type="NCBIfam" id="NF001109">
    <property type="entry name" value="PRK00136.1"/>
    <property type="match status" value="1"/>
</dbReference>
<dbReference type="PANTHER" id="PTHR11758">
    <property type="entry name" value="40S RIBOSOMAL PROTEIN S15A"/>
    <property type="match status" value="1"/>
</dbReference>
<dbReference type="Pfam" id="PF00410">
    <property type="entry name" value="Ribosomal_S8"/>
    <property type="match status" value="1"/>
</dbReference>
<dbReference type="SUPFAM" id="SSF56047">
    <property type="entry name" value="Ribosomal protein S8"/>
    <property type="match status" value="1"/>
</dbReference>
<name>RS8_MYCVP</name>
<evidence type="ECO:0000255" key="1">
    <source>
        <dbReference type="HAMAP-Rule" id="MF_01302"/>
    </source>
</evidence>
<evidence type="ECO:0000305" key="2"/>
<protein>
    <recommendedName>
        <fullName evidence="1">Small ribosomal subunit protein uS8</fullName>
    </recommendedName>
    <alternativeName>
        <fullName evidence="2">30S ribosomal protein S8</fullName>
    </alternativeName>
</protein>
<organism>
    <name type="scientific">Mycolicibacterium vanbaalenii (strain DSM 7251 / JCM 13017 / BCRC 16820 / KCTC 9966 / NRRL B-24157 / PYR-1)</name>
    <name type="common">Mycobacterium vanbaalenii</name>
    <dbReference type="NCBI Taxonomy" id="350058"/>
    <lineage>
        <taxon>Bacteria</taxon>
        <taxon>Bacillati</taxon>
        <taxon>Actinomycetota</taxon>
        <taxon>Actinomycetes</taxon>
        <taxon>Mycobacteriales</taxon>
        <taxon>Mycobacteriaceae</taxon>
        <taxon>Mycolicibacterium</taxon>
    </lineage>
</organism>
<keyword id="KW-0687">Ribonucleoprotein</keyword>
<keyword id="KW-0689">Ribosomal protein</keyword>
<keyword id="KW-0694">RNA-binding</keyword>
<keyword id="KW-0699">rRNA-binding</keyword>
<reference key="1">
    <citation type="submission" date="2006-12" db="EMBL/GenBank/DDBJ databases">
        <title>Complete sequence of Mycobacterium vanbaalenii PYR-1.</title>
        <authorList>
            <consortium name="US DOE Joint Genome Institute"/>
            <person name="Copeland A."/>
            <person name="Lucas S."/>
            <person name="Lapidus A."/>
            <person name="Barry K."/>
            <person name="Detter J.C."/>
            <person name="Glavina del Rio T."/>
            <person name="Hammon N."/>
            <person name="Israni S."/>
            <person name="Dalin E."/>
            <person name="Tice H."/>
            <person name="Pitluck S."/>
            <person name="Singan V."/>
            <person name="Schmutz J."/>
            <person name="Larimer F."/>
            <person name="Land M."/>
            <person name="Hauser L."/>
            <person name="Kyrpides N."/>
            <person name="Anderson I.J."/>
            <person name="Miller C."/>
            <person name="Richardson P."/>
        </authorList>
    </citation>
    <scope>NUCLEOTIDE SEQUENCE [LARGE SCALE GENOMIC DNA]</scope>
    <source>
        <strain>DSM 7251 / JCM 13017 / BCRC 16820 / KCTC 9966 / NRRL B-24157 / PYR-1</strain>
    </source>
</reference>
<accession>A1T4S0</accession>